<organism>
    <name type="scientific">Xenopus laevis</name>
    <name type="common">African clawed frog</name>
    <dbReference type="NCBI Taxonomy" id="8355"/>
    <lineage>
        <taxon>Eukaryota</taxon>
        <taxon>Metazoa</taxon>
        <taxon>Chordata</taxon>
        <taxon>Craniata</taxon>
        <taxon>Vertebrata</taxon>
        <taxon>Euteleostomi</taxon>
        <taxon>Amphibia</taxon>
        <taxon>Batrachia</taxon>
        <taxon>Anura</taxon>
        <taxon>Pipoidea</taxon>
        <taxon>Pipidae</taxon>
        <taxon>Xenopodinae</taxon>
        <taxon>Xenopus</taxon>
        <taxon>Xenopus</taxon>
    </lineage>
</organism>
<comment type="function">
    <text evidence="1 2 5 6 7">Has a role in non-canonical Wnt/planar cell polarity (PCP) signaling; can recruit dvl/dsh and prickle from the cytoplasm to the plasma membrane. Acts in a PCP complex to regulate the polarized assembly of fibronectrin on the surface of the mesoderm during gastrulation. Regulates convergent extension cell movements in both dorsal mesoderm and neural tissue during gastrulation, without affecting cell fate. Regulates neural fold closure during neurulation (PubMed:11780127, PubMed:11867525, PubMed:12421719). May be required for cell surface localization of fzd3 and fzd6 in the inner ear (By similarity).</text>
</comment>
<comment type="subunit">
    <text evidence="5 9 10">Interacts with dvl/dsh (PubMed:11780127). Interacts with prickle3 (PubMed:26079437, PubMed:27658614).</text>
</comment>
<comment type="subcellular location">
    <subcellularLocation>
        <location evidence="5 8">Cell membrane</location>
        <topology evidence="5 8">Multi-pass membrane protein</topology>
    </subcellularLocation>
    <text evidence="5 8">Cell membrane localization is regulated by prickle.</text>
</comment>
<comment type="tissue specificity">
    <text evidence="5 6">During gastrulation, broadly expressed throughout the marginal zone and animal cap region. From the neurula stages, expression becomes concentrated in neural tissues, in the neural plate and neural tube.</text>
</comment>
<comment type="developmental stage">
    <text evidence="5 6">Expressed both maternally and zygotically throughout early development, with expression peaking at the neurula stage.</text>
</comment>
<comment type="similarity">
    <text evidence="3">Belongs to the Vang family.</text>
</comment>
<dbReference type="EMBL" id="AY069979">
    <property type="protein sequence ID" value="AAL58480.1"/>
    <property type="molecule type" value="mRNA"/>
</dbReference>
<dbReference type="EMBL" id="AF427792">
    <property type="protein sequence ID" value="AAL28089.1"/>
    <property type="molecule type" value="mRNA"/>
</dbReference>
<dbReference type="EMBL" id="BC072119">
    <property type="protein sequence ID" value="AAH72119.1"/>
    <property type="molecule type" value="mRNA"/>
</dbReference>
<dbReference type="RefSeq" id="NP_001082179.1">
    <property type="nucleotide sequence ID" value="NM_001088710.1"/>
</dbReference>
<dbReference type="SMR" id="Q90X64"/>
<dbReference type="DNASU" id="398271"/>
<dbReference type="GeneID" id="398271"/>
<dbReference type="KEGG" id="xla:398271"/>
<dbReference type="AGR" id="Xenbase:XB-GENE-6251797"/>
<dbReference type="CTD" id="398271"/>
<dbReference type="Xenbase" id="XB-GENE-6251797">
    <property type="gene designation" value="vangl2.L"/>
</dbReference>
<dbReference type="OMA" id="MWHREND"/>
<dbReference type="OrthoDB" id="8887313at2759"/>
<dbReference type="Proteomes" id="UP000186698">
    <property type="component" value="Chromosome 8L"/>
</dbReference>
<dbReference type="Bgee" id="398271">
    <property type="expression patterns" value="Expressed in egg cell and 19 other cell types or tissues"/>
</dbReference>
<dbReference type="GO" id="GO:0016020">
    <property type="term" value="C:membrane"/>
    <property type="evidence" value="ECO:0000303"/>
    <property type="project" value="UniProtKB"/>
</dbReference>
<dbReference type="GO" id="GO:0005886">
    <property type="term" value="C:plasma membrane"/>
    <property type="evidence" value="ECO:0000314"/>
    <property type="project" value="UniProtKB"/>
</dbReference>
<dbReference type="GO" id="GO:0098797">
    <property type="term" value="C:plasma membrane protein complex"/>
    <property type="evidence" value="ECO:0000314"/>
    <property type="project" value="Xenbase"/>
</dbReference>
<dbReference type="GO" id="GO:0060027">
    <property type="term" value="P:convergent extension involved in gastrulation"/>
    <property type="evidence" value="ECO:0000315"/>
    <property type="project" value="UniProtKB"/>
</dbReference>
<dbReference type="GO" id="GO:0001736">
    <property type="term" value="P:establishment of planar polarity"/>
    <property type="evidence" value="ECO:0000315"/>
    <property type="project" value="Xenbase"/>
</dbReference>
<dbReference type="GO" id="GO:0001702">
    <property type="term" value="P:gastrulation with mouth forming second"/>
    <property type="evidence" value="ECO:0000315"/>
    <property type="project" value="Xenbase"/>
</dbReference>
<dbReference type="GO" id="GO:0007254">
    <property type="term" value="P:JNK cascade"/>
    <property type="evidence" value="ECO:0000315"/>
    <property type="project" value="Xenbase"/>
</dbReference>
<dbReference type="GO" id="GO:0090090">
    <property type="term" value="P:negative regulation of canonical Wnt signaling pathway"/>
    <property type="evidence" value="ECO:0000250"/>
    <property type="project" value="UniProtKB"/>
</dbReference>
<dbReference type="GO" id="GO:0001843">
    <property type="term" value="P:neural tube closure"/>
    <property type="evidence" value="ECO:0000315"/>
    <property type="project" value="UniProtKB"/>
</dbReference>
<dbReference type="GO" id="GO:0035567">
    <property type="term" value="P:non-canonical Wnt signaling pathway"/>
    <property type="evidence" value="ECO:0000315"/>
    <property type="project" value="Xenbase"/>
</dbReference>
<dbReference type="GO" id="GO:0045813">
    <property type="term" value="P:positive regulation of Wnt signaling pathway, calcium modulating pathway"/>
    <property type="evidence" value="ECO:0000250"/>
    <property type="project" value="UniProtKB"/>
</dbReference>
<dbReference type="GO" id="GO:0060071">
    <property type="term" value="P:Wnt signaling pathway, planar cell polarity pathway"/>
    <property type="evidence" value="ECO:0000250"/>
    <property type="project" value="UniProtKB"/>
</dbReference>
<dbReference type="InterPro" id="IPR009539">
    <property type="entry name" value="VANGL"/>
</dbReference>
<dbReference type="PANTHER" id="PTHR20886">
    <property type="entry name" value="VANG-LIKE PROTEIN"/>
    <property type="match status" value="1"/>
</dbReference>
<dbReference type="Pfam" id="PF06638">
    <property type="entry name" value="Strabismus"/>
    <property type="match status" value="1"/>
</dbReference>
<dbReference type="PIRSF" id="PIRSF007991">
    <property type="entry name" value="Strabismus"/>
    <property type="match status" value="1"/>
</dbReference>
<accession>Q90X64</accession>
<proteinExistence type="evidence at protein level"/>
<name>VNG2A_XENLA</name>
<protein>
    <recommendedName>
        <fullName>Vang-like protein 2-A</fullName>
    </recommendedName>
    <alternativeName>
        <fullName>Protein strabismus-A</fullName>
    </alternativeName>
    <alternativeName>
        <fullName>Van Gogh-like protein 2-A</fullName>
    </alternativeName>
    <alternativeName>
        <fullName>Xstrabismus-A</fullName>
        <shortName>Xstbm-A</shortName>
    </alternativeName>
</protein>
<gene>
    <name type="primary">vangl2-a</name>
    <name type="synonym">stbm-a</name>
</gene>
<reference evidence="11 14" key="1">
    <citation type="journal article" date="2002" name="EMBO J.">
        <title>The planar polarity gene strabismus regulates convergent extension movements in Xenopus.</title>
        <authorList>
            <person name="Darken R.S."/>
            <person name="Scola A.M."/>
            <person name="Rakeman A.S."/>
            <person name="Das G."/>
            <person name="Mlodzik M."/>
            <person name="Wilson P.A."/>
        </authorList>
    </citation>
    <scope>NUCLEOTIDE SEQUENCE [MRNA]</scope>
    <scope>FUNCTION</scope>
    <scope>TISSUE SPECIFICITY</scope>
    <scope>DEVELOPMENTAL STAGE</scope>
    <source>
        <tissue evidence="6">Gastrula</tissue>
    </source>
</reference>
<reference evidence="11 13" key="2">
    <citation type="journal article" date="2002" name="Nat. Cell Biol.">
        <title>The planar cell-polarity gene stbm regulates cell behaviour and cell fate in vertebrate embryos.</title>
        <authorList>
            <person name="Park M."/>
            <person name="Moon R.T."/>
        </authorList>
    </citation>
    <scope>NUCLEOTIDE SEQUENCE [MRNA]</scope>
    <scope>FUNCTION</scope>
    <scope>SUBCELLULAR LOCATION</scope>
    <scope>INTERACTION WITH DVL</scope>
    <scope>TISSUE SPECIFICITY</scope>
    <scope>DEVELOPMENTAL STAGE</scope>
    <source>
        <tissue evidence="5">Tail bud</tissue>
    </source>
</reference>
<reference key="3">
    <citation type="journal article" date="2002" name="Nat. Cell Biol.">
        <authorList>
            <person name="Park M."/>
            <person name="Moon R.T."/>
        </authorList>
    </citation>
    <scope>ERRATUM OF PUBMED:11780127</scope>
</reference>
<reference evidence="12" key="4">
    <citation type="submission" date="2004-06" db="EMBL/GenBank/DDBJ databases">
        <authorList>
            <consortium name="NIH - Xenopus Gene Collection (XGC) project"/>
        </authorList>
    </citation>
    <scope>NUCLEOTIDE SEQUENCE [LARGE SCALE MRNA]</scope>
    <source>
        <tissue evidence="12">Ovary</tissue>
    </source>
</reference>
<reference evidence="11" key="5">
    <citation type="journal article" date="2002" name="Development">
        <title>Neural tube closure requires Dishevelled-dependent convergent extension of the midline.</title>
        <authorList>
            <person name="Wallingford J.B."/>
            <person name="Harland R.M."/>
        </authorList>
    </citation>
    <scope>FUNCTION</scope>
</reference>
<reference evidence="11" key="6">
    <citation type="journal article" date="2003" name="EMBO J.">
        <title>Prickle and Strabismus form a functional complex to generate a correct axis during planar cell polarity signaling.</title>
        <authorList>
            <person name="Jenny A."/>
            <person name="Darken R.S."/>
            <person name="Wilson P.A."/>
            <person name="Mlodzik M."/>
        </authorList>
    </citation>
    <scope>SUBCELLULAR LOCATION</scope>
</reference>
<reference key="7">
    <citation type="journal article" date="2015" name="Dev. Biol.">
        <title>The involvement of PCP proteins in radial cell intercalations during Xenopus embryonic development.</title>
        <authorList>
            <person name="Ossipova O."/>
            <person name="Chu C.W."/>
            <person name="Fillatre J."/>
            <person name="Brott B.K."/>
            <person name="Itoh K."/>
            <person name="Sokol S.Y."/>
        </authorList>
    </citation>
    <scope>INTERACTION WITH PRICKLE3</scope>
</reference>
<reference key="8">
    <citation type="journal article" date="2016" name="Elife">
        <title>Wnt proteins can direct planar cell polarity in vertebrate ectoderm.</title>
        <authorList>
            <person name="Chu C.W."/>
            <person name="Sokol S.Y."/>
        </authorList>
    </citation>
    <scope>INTERACTION WITH PRICKLE3</scope>
</reference>
<sequence>MDNDSQYSGYSYKSGHSRSSRKHRDRRERHRSKSREGSRGDKSVTIQAPGEPLLDNESTRGEDRDDNWGETTTVVTGTSEHSISHDDITRITKDMEDSAKLDCSRHLGVVIGGALALLSFLTPIAFMLLPQILWREDLEQCGTACEGLFISVAFKLLILLLGSWALFFRRPKAFFPRVFVFRALLMVLVFLLVVSYWLFYGVRILESRDKNYQGIVQYAVSLVDALLFVHYLAVVLLELRQLQPQFTIKVVRSTDGASRFYNIGHLSIQRVAVWILENYYHDFPVYNPALLNLPKSILSKKMSGFKVYSLGEENTTNNSTGQSRAVIAAAARRRDNSHNEYYYEEAEHERRVRKRKARLVVAVEEAFTHIKRLQDEDQKNPREIMDPREAAQAIFASMARAMQKYLRTTKQQPYHTMESILHHLEFCITHDMTPKAFLERYLGPGPTIQYHKDRWLAKQWTLVSEEPVTNGLKDGVVFVLKRQDFSLVVSTKKIPFFKLSEEFVDPKSHKFVMRLQSETSV</sequence>
<keyword id="KW-1003">Cell membrane</keyword>
<keyword id="KW-0217">Developmental protein</keyword>
<keyword id="KW-0306">Gastrulation</keyword>
<keyword id="KW-0472">Membrane</keyword>
<keyword id="KW-1185">Reference proteome</keyword>
<keyword id="KW-0812">Transmembrane</keyword>
<keyword id="KW-1133">Transmembrane helix</keyword>
<keyword id="KW-0879">Wnt signaling pathway</keyword>
<feature type="chain" id="PRO_0000282964" description="Vang-like protein 2-A">
    <location>
        <begin position="1"/>
        <end position="521"/>
    </location>
</feature>
<feature type="topological domain" description="Cytoplasmic" evidence="3">
    <location>
        <begin position="1"/>
        <end position="108"/>
    </location>
</feature>
<feature type="transmembrane region" description="Helical; Name=1" evidence="3">
    <location>
        <begin position="109"/>
        <end position="129"/>
    </location>
</feature>
<feature type="topological domain" description="Extracellular" evidence="3">
    <location>
        <begin position="130"/>
        <end position="147"/>
    </location>
</feature>
<feature type="transmembrane region" description="Helical; Name=2" evidence="3">
    <location>
        <begin position="148"/>
        <end position="168"/>
    </location>
</feature>
<feature type="topological domain" description="Cytoplasmic" evidence="3">
    <location>
        <begin position="169"/>
        <end position="178"/>
    </location>
</feature>
<feature type="transmembrane region" description="Helical; Name=3" evidence="3">
    <location>
        <begin position="179"/>
        <end position="199"/>
    </location>
</feature>
<feature type="topological domain" description="Extracellular" evidence="3">
    <location>
        <begin position="200"/>
        <end position="218"/>
    </location>
</feature>
<feature type="transmembrane region" description="Helical; Name=4" evidence="3">
    <location>
        <begin position="219"/>
        <end position="239"/>
    </location>
</feature>
<feature type="topological domain" description="Cytoplasmic" evidence="3">
    <location>
        <begin position="240"/>
        <end position="521"/>
    </location>
</feature>
<feature type="region of interest" description="Disordered" evidence="4">
    <location>
        <begin position="1"/>
        <end position="81"/>
    </location>
</feature>
<feature type="short sequence motif" description="PDZ-binding" evidence="3">
    <location>
        <begin position="518"/>
        <end position="521"/>
    </location>
</feature>
<feature type="compositionally biased region" description="Basic residues" evidence="4">
    <location>
        <begin position="15"/>
        <end position="33"/>
    </location>
</feature>
<feature type="compositionally biased region" description="Basic and acidic residues" evidence="4">
    <location>
        <begin position="57"/>
        <end position="67"/>
    </location>
</feature>
<feature type="compositionally biased region" description="Low complexity" evidence="4">
    <location>
        <begin position="69"/>
        <end position="81"/>
    </location>
</feature>
<evidence type="ECO:0000250" key="1">
    <source>
        <dbReference type="UniProtKB" id="Q90Z05"/>
    </source>
</evidence>
<evidence type="ECO:0000250" key="2">
    <source>
        <dbReference type="UniProtKB" id="Q91ZD4"/>
    </source>
</evidence>
<evidence type="ECO:0000255" key="3"/>
<evidence type="ECO:0000256" key="4">
    <source>
        <dbReference type="SAM" id="MobiDB-lite"/>
    </source>
</evidence>
<evidence type="ECO:0000269" key="5">
    <source>
    </source>
</evidence>
<evidence type="ECO:0000269" key="6">
    <source>
    </source>
</evidence>
<evidence type="ECO:0000269" key="7">
    <source>
    </source>
</evidence>
<evidence type="ECO:0000269" key="8">
    <source>
    </source>
</evidence>
<evidence type="ECO:0000269" key="9">
    <source>
    </source>
</evidence>
<evidence type="ECO:0000269" key="10">
    <source>
    </source>
</evidence>
<evidence type="ECO:0000305" key="11"/>
<evidence type="ECO:0000312" key="12">
    <source>
        <dbReference type="EMBL" id="AAH72119.1"/>
    </source>
</evidence>
<evidence type="ECO:0000312" key="13">
    <source>
        <dbReference type="EMBL" id="AAL28089.1"/>
    </source>
</evidence>
<evidence type="ECO:0000312" key="14">
    <source>
        <dbReference type="EMBL" id="AAL58480.1"/>
    </source>
</evidence>